<proteinExistence type="inferred from homology"/>
<keyword id="KW-0963">Cytoplasm</keyword>
<keyword id="KW-0274">FAD</keyword>
<keyword id="KW-0285">Flavoprotein</keyword>
<keyword id="KW-0489">Methyltransferase</keyword>
<keyword id="KW-0511">Multifunctional enzyme</keyword>
<keyword id="KW-0560">Oxidoreductase</keyword>
<keyword id="KW-1185">Reference proteome</keyword>
<keyword id="KW-0949">S-adenosyl-L-methionine</keyword>
<keyword id="KW-0808">Transferase</keyword>
<keyword id="KW-0819">tRNA processing</keyword>
<dbReference type="EC" id="2.1.1.61" evidence="1"/>
<dbReference type="EC" id="1.5.-.-" evidence="1"/>
<dbReference type="EMBL" id="AE014075">
    <property type="protein sequence ID" value="AAN81320.1"/>
    <property type="status" value="ALT_INIT"/>
    <property type="molecule type" value="Genomic_DNA"/>
</dbReference>
<dbReference type="RefSeq" id="WP_000683752.1">
    <property type="nucleotide sequence ID" value="NZ_CP051263.1"/>
</dbReference>
<dbReference type="SMR" id="Q8FFH0"/>
<dbReference type="STRING" id="199310.c2870"/>
<dbReference type="KEGG" id="ecc:c2870"/>
<dbReference type="eggNOG" id="COG0665">
    <property type="taxonomic scope" value="Bacteria"/>
</dbReference>
<dbReference type="eggNOG" id="COG4121">
    <property type="taxonomic scope" value="Bacteria"/>
</dbReference>
<dbReference type="HOGENOM" id="CLU_022427_1_0_6"/>
<dbReference type="Proteomes" id="UP000001410">
    <property type="component" value="Chromosome"/>
</dbReference>
<dbReference type="GO" id="GO:0005737">
    <property type="term" value="C:cytoplasm"/>
    <property type="evidence" value="ECO:0007669"/>
    <property type="project" value="UniProtKB-SubCell"/>
</dbReference>
<dbReference type="GO" id="GO:0050660">
    <property type="term" value="F:flavin adenine dinucleotide binding"/>
    <property type="evidence" value="ECO:0007669"/>
    <property type="project" value="UniProtKB-UniRule"/>
</dbReference>
<dbReference type="GO" id="GO:0016645">
    <property type="term" value="F:oxidoreductase activity, acting on the CH-NH group of donors"/>
    <property type="evidence" value="ECO:0007669"/>
    <property type="project" value="InterPro"/>
</dbReference>
<dbReference type="GO" id="GO:0004808">
    <property type="term" value="F:tRNA (5-methylaminomethyl-2-thiouridylate)(34)-methyltransferase activity"/>
    <property type="evidence" value="ECO:0007669"/>
    <property type="project" value="UniProtKB-EC"/>
</dbReference>
<dbReference type="GO" id="GO:0032259">
    <property type="term" value="P:methylation"/>
    <property type="evidence" value="ECO:0007669"/>
    <property type="project" value="UniProtKB-KW"/>
</dbReference>
<dbReference type="GO" id="GO:0002098">
    <property type="term" value="P:tRNA wobble uridine modification"/>
    <property type="evidence" value="ECO:0007669"/>
    <property type="project" value="TreeGrafter"/>
</dbReference>
<dbReference type="FunFam" id="3.40.50.150:FF:000107">
    <property type="entry name" value="tRNA 5-methylaminomethyl-2-thiouridine biosynthesis bifunctional protein MnmC"/>
    <property type="match status" value="1"/>
</dbReference>
<dbReference type="Gene3D" id="3.30.9.10">
    <property type="entry name" value="D-Amino Acid Oxidase, subunit A, domain 2"/>
    <property type="match status" value="1"/>
</dbReference>
<dbReference type="Gene3D" id="3.50.50.60">
    <property type="entry name" value="FAD/NAD(P)-binding domain"/>
    <property type="match status" value="1"/>
</dbReference>
<dbReference type="Gene3D" id="3.40.50.150">
    <property type="entry name" value="Vaccinia Virus protein VP39"/>
    <property type="match status" value="1"/>
</dbReference>
<dbReference type="HAMAP" id="MF_01102">
    <property type="entry name" value="MnmC"/>
    <property type="match status" value="1"/>
</dbReference>
<dbReference type="InterPro" id="IPR006076">
    <property type="entry name" value="FAD-dep_OxRdtase"/>
</dbReference>
<dbReference type="InterPro" id="IPR036188">
    <property type="entry name" value="FAD/NAD-bd_sf"/>
</dbReference>
<dbReference type="InterPro" id="IPR008471">
    <property type="entry name" value="MnmC-like_methylTransf"/>
</dbReference>
<dbReference type="InterPro" id="IPR029063">
    <property type="entry name" value="SAM-dependent_MTases_sf"/>
</dbReference>
<dbReference type="InterPro" id="IPR023032">
    <property type="entry name" value="tRNA_MAMT_biosynth_bifunc_MnmC"/>
</dbReference>
<dbReference type="InterPro" id="IPR047785">
    <property type="entry name" value="tRNA_MNMC2"/>
</dbReference>
<dbReference type="InterPro" id="IPR017610">
    <property type="entry name" value="tRNA_S-uridine_synth_MnmC_C"/>
</dbReference>
<dbReference type="NCBIfam" id="TIGR03197">
    <property type="entry name" value="MnmC_Cterm"/>
    <property type="match status" value="1"/>
</dbReference>
<dbReference type="NCBIfam" id="NF002480">
    <property type="entry name" value="PRK01747.1-1"/>
    <property type="match status" value="1"/>
</dbReference>
<dbReference type="NCBIfam" id="NF002481">
    <property type="entry name" value="PRK01747.1-2"/>
    <property type="match status" value="1"/>
</dbReference>
<dbReference type="NCBIfam" id="NF002482">
    <property type="entry name" value="PRK01747.1-3"/>
    <property type="match status" value="1"/>
</dbReference>
<dbReference type="NCBIfam" id="NF002484">
    <property type="entry name" value="PRK01747.1-5"/>
    <property type="match status" value="1"/>
</dbReference>
<dbReference type="NCBIfam" id="NF033855">
    <property type="entry name" value="tRNA_MNMC2"/>
    <property type="match status" value="1"/>
</dbReference>
<dbReference type="PANTHER" id="PTHR13847">
    <property type="entry name" value="SARCOSINE DEHYDROGENASE-RELATED"/>
    <property type="match status" value="1"/>
</dbReference>
<dbReference type="PANTHER" id="PTHR13847:SF283">
    <property type="entry name" value="TRNA 5-METHYLAMINOMETHYL-2-THIOURIDINE BIOSYNTHESIS BIFUNCTIONAL PROTEIN MNMC"/>
    <property type="match status" value="1"/>
</dbReference>
<dbReference type="Pfam" id="PF01266">
    <property type="entry name" value="DAO"/>
    <property type="match status" value="1"/>
</dbReference>
<dbReference type="Pfam" id="PF05430">
    <property type="entry name" value="Methyltransf_30"/>
    <property type="match status" value="1"/>
</dbReference>
<dbReference type="SUPFAM" id="SSF51905">
    <property type="entry name" value="FAD/NAD(P)-binding domain"/>
    <property type="match status" value="1"/>
</dbReference>
<gene>
    <name evidence="1" type="primary">mnmC</name>
    <name type="ordered locus">c2870</name>
</gene>
<evidence type="ECO:0000255" key="1">
    <source>
        <dbReference type="HAMAP-Rule" id="MF_01102"/>
    </source>
</evidence>
<evidence type="ECO:0000305" key="2"/>
<sequence>MKHYSIQPANLEFNAEGTPVSRDFDDVYFSNDNGLEETRYVFLGGNHLEARFPEHPHPLFVVAESGFGTGLNFLTLWQAFDQFREAHPQAQLQRLHFISFEKFPLTRADLALAHQHWPELAPWAEQLQAQWPLPLPGCHRLLLDEGHVTLDLWFGDINELTSQLDDSLNQKVDAWFLDGFAPAKNPDMWTQNLFNAMARLARPGSTLATFTSAGFVRRGLQEAGFTMQKRKGFGRKREMLCGVMEQTLPFPCSTPWFNRMGSNKQEAAIIGGGIASALLSLALLRRGWQVTLYCADEAPALGASGNRQGALYPLLSKHDEALNRFFSNAFTFARRFYDLLPVKFDHDWCGVTQLGWDEKSQHKIAQMLSMDLPAELAVAVEANAVEQITGVATNCSGITYPQGGWLCPAELTRNVLELAQQQGLQIHYQHQLQDLSRKDDGWLLNFAGDQHATHSVVVLANGHQISGFSQTSSLPVYSVAGQVSHIPTTPELAKLKQVLCYDGYLTPQNPANQHHCIGASYHRGSEETAYSDEDQQQNRQRLIDCFPQVQWAKEVDVSGKEARCGVRCATRDHLPMVGNVPDYDATLVEYASLAEKKDEAVSAPVYDDLFMFAALGSRGLCSAPLCAEILAAQMSEEPIPMDASTLAALNPNRLWVRKLLKGKAVKAG</sequence>
<organism>
    <name type="scientific">Escherichia coli O6:H1 (strain CFT073 / ATCC 700928 / UPEC)</name>
    <dbReference type="NCBI Taxonomy" id="199310"/>
    <lineage>
        <taxon>Bacteria</taxon>
        <taxon>Pseudomonadati</taxon>
        <taxon>Pseudomonadota</taxon>
        <taxon>Gammaproteobacteria</taxon>
        <taxon>Enterobacterales</taxon>
        <taxon>Enterobacteriaceae</taxon>
        <taxon>Escherichia</taxon>
    </lineage>
</organism>
<name>MNMC_ECOL6</name>
<accession>Q8FFH0</accession>
<reference key="1">
    <citation type="journal article" date="2002" name="Proc. Natl. Acad. Sci. U.S.A.">
        <title>Extensive mosaic structure revealed by the complete genome sequence of uropathogenic Escherichia coli.</title>
        <authorList>
            <person name="Welch R.A."/>
            <person name="Burland V."/>
            <person name="Plunkett G. III"/>
            <person name="Redford P."/>
            <person name="Roesch P."/>
            <person name="Rasko D."/>
            <person name="Buckles E.L."/>
            <person name="Liou S.-R."/>
            <person name="Boutin A."/>
            <person name="Hackett J."/>
            <person name="Stroud D."/>
            <person name="Mayhew G.F."/>
            <person name="Rose D.J."/>
            <person name="Zhou S."/>
            <person name="Schwartz D.C."/>
            <person name="Perna N.T."/>
            <person name="Mobley H.L.T."/>
            <person name="Donnenberg M.S."/>
            <person name="Blattner F.R."/>
        </authorList>
    </citation>
    <scope>NUCLEOTIDE SEQUENCE [LARGE SCALE GENOMIC DNA]</scope>
    <source>
        <strain>CFT073 / ATCC 700928 / UPEC</strain>
    </source>
</reference>
<comment type="function">
    <text evidence="1">Catalyzes the last two steps in the biosynthesis of 5-methylaminomethyl-2-thiouridine (mnm(5)s(2)U) at the wobble position (U34) in tRNA. Catalyzes the FAD-dependent demodification of cmnm(5)s(2)U34 to nm(5)s(2)U34, followed by the transfer of a methyl group from S-adenosyl-L-methionine to nm(5)s(2)U34, to form mnm(5)s(2)U34.</text>
</comment>
<comment type="catalytic activity">
    <reaction evidence="1">
        <text>5-aminomethyl-2-thiouridine(34) in tRNA + S-adenosyl-L-methionine = 5-methylaminomethyl-2-thiouridine(34) in tRNA + S-adenosyl-L-homocysteine + H(+)</text>
        <dbReference type="Rhea" id="RHEA:19569"/>
        <dbReference type="Rhea" id="RHEA-COMP:10195"/>
        <dbReference type="Rhea" id="RHEA-COMP:10197"/>
        <dbReference type="ChEBI" id="CHEBI:15378"/>
        <dbReference type="ChEBI" id="CHEBI:57856"/>
        <dbReference type="ChEBI" id="CHEBI:59789"/>
        <dbReference type="ChEBI" id="CHEBI:74454"/>
        <dbReference type="ChEBI" id="CHEBI:74455"/>
        <dbReference type="EC" id="2.1.1.61"/>
    </reaction>
</comment>
<comment type="cofactor">
    <cofactor evidence="1">
        <name>FAD</name>
        <dbReference type="ChEBI" id="CHEBI:57692"/>
    </cofactor>
</comment>
<comment type="subcellular location">
    <subcellularLocation>
        <location evidence="1">Cytoplasm</location>
    </subcellularLocation>
</comment>
<comment type="similarity">
    <text evidence="1">In the N-terminal section; belongs to the methyltransferase superfamily. tRNA (mnm(5)s(2)U34)-methyltransferase family.</text>
</comment>
<comment type="similarity">
    <text evidence="1">In the C-terminal section; belongs to the DAO family.</text>
</comment>
<comment type="sequence caution" evidence="2">
    <conflict type="erroneous initiation">
        <sequence resource="EMBL-CDS" id="AAN81320"/>
    </conflict>
</comment>
<protein>
    <recommendedName>
        <fullName evidence="1">tRNA 5-methylaminomethyl-2-thiouridine biosynthesis bifunctional protein MnmC</fullName>
        <shortName evidence="1">tRNA mnm(5)s(2)U biosynthesis bifunctional protein</shortName>
    </recommendedName>
    <domain>
        <recommendedName>
            <fullName evidence="1">tRNA (mnm(5)s(2)U34)-methyltransferase</fullName>
            <ecNumber evidence="1">2.1.1.61</ecNumber>
        </recommendedName>
    </domain>
    <domain>
        <recommendedName>
            <fullName evidence="1">FAD-dependent cmnm(5)s(2)U34 oxidoreductase</fullName>
            <ecNumber evidence="1">1.5.-.-</ecNumber>
        </recommendedName>
    </domain>
</protein>
<feature type="chain" id="PRO_0000095013" description="tRNA 5-methylaminomethyl-2-thiouridine biosynthesis bifunctional protein MnmC">
    <location>
        <begin position="1"/>
        <end position="668"/>
    </location>
</feature>
<feature type="region of interest" description="tRNA (mnm(5)s(2)U34)-methyltransferase">
    <location>
        <begin position="1"/>
        <end position="245"/>
    </location>
</feature>
<feature type="region of interest" description="FAD-dependent cmnm(5)s(2)U34 oxidoreductase">
    <location>
        <begin position="270"/>
        <end position="668"/>
    </location>
</feature>